<evidence type="ECO:0000250" key="1"/>
<evidence type="ECO:0000250" key="2">
    <source>
        <dbReference type="UniProtKB" id="P01274"/>
    </source>
</evidence>
<evidence type="ECO:0000250" key="3">
    <source>
        <dbReference type="UniProtKB" id="P01275"/>
    </source>
</evidence>
<evidence type="ECO:0000250" key="4">
    <source>
        <dbReference type="UniProtKB" id="P06883"/>
    </source>
</evidence>
<evidence type="ECO:0000250" key="5">
    <source>
        <dbReference type="UniProtKB" id="P09686"/>
    </source>
</evidence>
<evidence type="ECO:0000250" key="6">
    <source>
        <dbReference type="UniProtKB" id="P15438"/>
    </source>
</evidence>
<evidence type="ECO:0000250" key="7">
    <source>
        <dbReference type="UniProtKB" id="P55095"/>
    </source>
</evidence>
<evidence type="ECO:0000256" key="8">
    <source>
        <dbReference type="SAM" id="MobiDB-lite"/>
    </source>
</evidence>
<evidence type="ECO:0000305" key="9"/>
<name>GLUC_OCTDE</name>
<keyword id="KW-0027">Amidation</keyword>
<keyword id="KW-0165">Cleavage on pair of basic residues</keyword>
<keyword id="KW-0372">Hormone</keyword>
<keyword id="KW-0597">Phosphoprotein</keyword>
<keyword id="KW-1185">Reference proteome</keyword>
<keyword id="KW-0964">Secreted</keyword>
<keyword id="KW-0732">Signal</keyword>
<gene>
    <name type="primary">GCG</name>
</gene>
<sequence>MKSIYFVAGLFVMLVQGSWQHPLQDTEEKPRSFSTSQTDLLDDPDQMNEDKRHSQGTFTSDYSKFLDTRRAQDFLDWLKNTKRNRNEIAKRHDEFERHAEGTFTSDVSSYLEGQAAKEFIAWLVKGRGRRDFPEEVTIVEELRRRHADGSFSDEMNTVLDHLATKDFINWLIQTKITDRK</sequence>
<dbReference type="EMBL" id="M57688">
    <property type="protein sequence ID" value="AAA40588.1"/>
    <property type="molecule type" value="mRNA"/>
</dbReference>
<dbReference type="PIR" id="C36118">
    <property type="entry name" value="GCRTDU"/>
</dbReference>
<dbReference type="RefSeq" id="XP_004629926.1">
    <property type="nucleotide sequence ID" value="XM_004629869.1"/>
</dbReference>
<dbReference type="SMR" id="P22890"/>
<dbReference type="FunCoup" id="P22890">
    <property type="interactions" value="579"/>
</dbReference>
<dbReference type="GeneID" id="101571972"/>
<dbReference type="CTD" id="2641"/>
<dbReference type="InParanoid" id="P22890"/>
<dbReference type="OrthoDB" id="9904258at2759"/>
<dbReference type="Proteomes" id="UP000515203">
    <property type="component" value="Unplaced"/>
</dbReference>
<dbReference type="GO" id="GO:0005615">
    <property type="term" value="C:extracellular space"/>
    <property type="evidence" value="ECO:0000250"/>
    <property type="project" value="UniProtKB"/>
</dbReference>
<dbReference type="GO" id="GO:0031769">
    <property type="term" value="F:glucagon receptor binding"/>
    <property type="evidence" value="ECO:0007669"/>
    <property type="project" value="TreeGrafter"/>
</dbReference>
<dbReference type="GO" id="GO:0005179">
    <property type="term" value="F:hormone activity"/>
    <property type="evidence" value="ECO:0007669"/>
    <property type="project" value="UniProtKB-KW"/>
</dbReference>
<dbReference type="GO" id="GO:0007188">
    <property type="term" value="P:adenylate cyclase-modulating G protein-coupled receptor signaling pathway"/>
    <property type="evidence" value="ECO:0007669"/>
    <property type="project" value="TreeGrafter"/>
</dbReference>
<dbReference type="GO" id="GO:0042593">
    <property type="term" value="P:glucose homeostasis"/>
    <property type="evidence" value="ECO:0000250"/>
    <property type="project" value="UniProtKB"/>
</dbReference>
<dbReference type="GO" id="GO:0043066">
    <property type="term" value="P:negative regulation of apoptotic process"/>
    <property type="evidence" value="ECO:0007669"/>
    <property type="project" value="TreeGrafter"/>
</dbReference>
<dbReference type="GO" id="GO:0035774">
    <property type="term" value="P:positive regulation of insulin secretion involved in cellular response to glucose stimulus"/>
    <property type="evidence" value="ECO:0007669"/>
    <property type="project" value="TreeGrafter"/>
</dbReference>
<dbReference type="GO" id="GO:0010737">
    <property type="term" value="P:protein kinase A signaling"/>
    <property type="evidence" value="ECO:0007669"/>
    <property type="project" value="TreeGrafter"/>
</dbReference>
<dbReference type="GO" id="GO:0050796">
    <property type="term" value="P:regulation of insulin secretion"/>
    <property type="evidence" value="ECO:0000250"/>
    <property type="project" value="UniProtKB"/>
</dbReference>
<dbReference type="GO" id="GO:0014823">
    <property type="term" value="P:response to activity"/>
    <property type="evidence" value="ECO:0000250"/>
    <property type="project" value="UniProtKB"/>
</dbReference>
<dbReference type="Gene3D" id="6.10.250.590">
    <property type="match status" value="3"/>
</dbReference>
<dbReference type="InterPro" id="IPR015550">
    <property type="entry name" value="Glucagon"/>
</dbReference>
<dbReference type="InterPro" id="IPR000532">
    <property type="entry name" value="Glucagon_GIP_secretin_VIP"/>
</dbReference>
<dbReference type="PANTHER" id="PTHR11418">
    <property type="entry name" value="GLUCAGON"/>
    <property type="match status" value="1"/>
</dbReference>
<dbReference type="PANTHER" id="PTHR11418:SF0">
    <property type="entry name" value="PRO-GLUCAGON"/>
    <property type="match status" value="1"/>
</dbReference>
<dbReference type="Pfam" id="PF00123">
    <property type="entry name" value="Hormone_2"/>
    <property type="match status" value="3"/>
</dbReference>
<dbReference type="PRINTS" id="PR00275">
    <property type="entry name" value="GLUCAGON"/>
</dbReference>
<dbReference type="SMART" id="SM00070">
    <property type="entry name" value="GLUCA"/>
    <property type="match status" value="3"/>
</dbReference>
<dbReference type="PROSITE" id="PS00260">
    <property type="entry name" value="GLUCAGON"/>
    <property type="match status" value="4"/>
</dbReference>
<protein>
    <recommendedName>
        <fullName>Pro-glucagon</fullName>
    </recommendedName>
    <component>
        <recommendedName>
            <fullName>Glicentin</fullName>
        </recommendedName>
    </component>
    <component>
        <recommendedName>
            <fullName>Glicentin-related polypeptide</fullName>
            <shortName>GRPP</shortName>
        </recommendedName>
    </component>
    <component>
        <recommendedName>
            <fullName>Oxyntomodulin</fullName>
            <shortName>OXM</shortName>
            <shortName>OXY</shortName>
        </recommendedName>
    </component>
    <component>
        <recommendedName>
            <fullName>Glucagon</fullName>
        </recommendedName>
    </component>
    <component>
        <recommendedName>
            <fullName>Glucagon-like peptide 1</fullName>
            <shortName>GLP-1</shortName>
        </recommendedName>
    </component>
    <component>
        <recommendedName>
            <fullName>Glucagon-like peptide 1(7-37)</fullName>
            <shortName>GLP-1(7-37)</shortName>
        </recommendedName>
    </component>
    <component>
        <recommendedName>
            <fullName>Glucagon-like peptide 1(7-36)</fullName>
            <shortName>GLP-1(7-36)</shortName>
        </recommendedName>
    </component>
    <component>
        <recommendedName>
            <fullName>Glucagon-like peptide 2</fullName>
            <shortName>GLP-2</shortName>
        </recommendedName>
    </component>
</protein>
<reference key="1">
    <citation type="journal article" date="1990" name="Mol. Endocrinol.">
        <title>Cloning of complementary DNAs encoding islet amyloid polypeptide, insulin, and glucagon precursors from a New World rodent, the degu, Octodon degus.</title>
        <authorList>
            <person name="Nishi M."/>
            <person name="Steiner D.F."/>
        </authorList>
    </citation>
    <scope>NUCLEOTIDE SEQUENCE [MRNA]</scope>
</reference>
<reference key="2">
    <citation type="journal article" date="2003" name="Mol. Endocrinol.">
        <title>Glucagon-like peptides: regulators of cell proliferation, differentiation, and apoptosis.</title>
        <authorList>
            <person name="Drucker D.J."/>
        </authorList>
    </citation>
    <scope>REVIEW</scope>
</reference>
<reference key="3">
    <citation type="journal article" date="2003" name="Am. J. Physiol.">
        <title>Glucagon and regulation of glucose metabolism.</title>
        <authorList>
            <person name="Jiang G."/>
            <person name="Zhang B.B."/>
        </authorList>
    </citation>
    <scope>REVIEW</scope>
</reference>
<reference key="4">
    <citation type="journal article" date="1999" name="Trends Endocrinol. Metab.">
        <title>Glucagon-like peptide 2.</title>
        <authorList>
            <person name="Drucker D.J."/>
        </authorList>
    </citation>
    <scope>REVIEW</scope>
</reference>
<reference key="5">
    <citation type="journal article" date="1999" name="Endocr. Rev.">
        <title>The glucagon-like peptides.</title>
        <authorList>
            <person name="Kieffer T.J."/>
            <person name="Habener J.F."/>
        </authorList>
    </citation>
    <scope>REVIEW</scope>
</reference>
<accession>P22890</accession>
<comment type="function">
    <molecule>Glucagon</molecule>
    <text evidence="7">Plays a key role in glucose metabolism and homeostasis. Regulates blood glucose by increasing gluconeogenesis and decreasing glycolysis. A counterregulatory hormone of insulin, raises plasma glucose levels in response to insulin-induced hypoglycemia. Plays an important role in initiating and maintaining hyperglycemic conditions in diabetes.</text>
</comment>
<comment type="function">
    <molecule>Glucagon-like peptide 1</molecule>
    <text evidence="7">Potent stimulator of glucose-dependent insulin release. Also stimulates insulin release in response to IL6. Plays important roles on gastric motility and the suppression of plasma glucagon levels. May be involved in the suppression of satiety and stimulation of glucose disposal in peripheral tissues, independent of the actions of insulin. Has growth-promoting activities on intestinal epithelium. May also regulate the hypothalamic pituitary axis (HPA) via effects on LH, TSH, CRH, oxytocin, and vasopressin secretion. Increases islet mass through stimulation of islet neogenesis and pancreatic beta cell proliferation. Inhibits beta cell apoptosis.</text>
</comment>
<comment type="function">
    <molecule>Glucagon-like peptide 2</molecule>
    <text evidence="7">Stimulates intestinal growth and up-regulates villus height in the small intestine, concomitant with increased crypt cell proliferation and decreased enterocyte apoptosis. The gastrointestinal tract, from the stomach to the colon is the principal target for GLP-2 action. Plays a key role in nutrient homeostasis, enhancing nutrient assimilation through enhanced gastrointestinal function, as well as increasing nutrient disposal. Stimulates intestinal glucose transport and decreases mucosal permeability.</text>
</comment>
<comment type="function">
    <molecule>Oxyntomodulin</molecule>
    <text evidence="7">Significantly reduces food intake. Inhibits gastric emptying in humans. Suppression of gastric emptying may lead to increased gastric distension, which may contribute to satiety by causing a sensation of fullness.</text>
</comment>
<comment type="function">
    <molecule>Glicentin</molecule>
    <text evidence="7">May modulate gastric acid secretion and the gastro-pyloro-duodenal activity. May play an important role in intestinal mucosal growth in the early period of life.</text>
</comment>
<comment type="subcellular location">
    <subcellularLocation>
        <location evidence="3">Secreted</location>
    </subcellularLocation>
</comment>
<comment type="subcellular location">
    <molecule>Glucagon-like peptide 1</molecule>
    <subcellularLocation>
        <location evidence="3">Secreted</location>
    </subcellularLocation>
</comment>
<comment type="tissue specificity">
    <text>Glucagon is secreted in the A cells of the islets of Langerhans. GLP-1, GLP-2, oxyntomodulin and glicentin are secreted from enteroendocrine cells throughout the gastrointestinal tract. GLP-1 and GLP-2 are also secreted in selected neurons in the brain.</text>
</comment>
<comment type="induction">
    <text evidence="1">Glucagon release is stimulated by hypoglycemia and inhibited by hyperglycemia, insulin, and somatostatin. GLP-1 and GLP-2 are induced in response to nutrient ingestion (By similarity).</text>
</comment>
<comment type="PTM">
    <text evidence="1">Proglucagon is post-translationally processed in a tissue-specific manner in pancreatic A cells and intestinal L cells. In pancreatic A cells, the major bioactive hormone is glucagon cleaved by PCSK2/PC2. In the intestinal L cells PCSK1/PC1 liberates GLP-1, GLP-2, glicentin and oxyntomodulin. GLP-1 is further N-terminally truncated by post-translational processing in the intestinal L cells resulting in GLP-1(7-37) GLP-1-(7-36)amide. The C-terminal amidation is neither important for the metabolism of GLP-1 nor for its effects on the endocrine pancreas (By similarity).</text>
</comment>
<comment type="similarity">
    <text evidence="9">Belongs to the glucagon family.</text>
</comment>
<feature type="signal peptide">
    <location>
        <begin position="1"/>
        <end position="20"/>
    </location>
</feature>
<feature type="peptide" id="PRO_0000011283" description="Glicentin" evidence="2">
    <location>
        <begin position="21"/>
        <end position="89"/>
    </location>
</feature>
<feature type="peptide" id="PRO_0000011284" description="Glicentin-related polypeptide" evidence="5">
    <location>
        <begin position="21"/>
        <end position="50"/>
    </location>
</feature>
<feature type="peptide" id="PRO_0000011285" description="Oxyntomodulin" evidence="4">
    <location>
        <begin position="53"/>
        <end position="89"/>
    </location>
</feature>
<feature type="peptide" id="PRO_0000011286" description="Glucagon" evidence="3">
    <location>
        <begin position="53"/>
        <end position="81"/>
    </location>
</feature>
<feature type="propeptide" id="PRO_0000011287" evidence="3">
    <location>
        <begin position="84"/>
        <end position="89"/>
    </location>
</feature>
<feature type="peptide" id="PRO_0000011288" description="Glucagon-like peptide 1" evidence="3">
    <location>
        <begin position="92"/>
        <end position="128"/>
    </location>
</feature>
<feature type="peptide" id="PRO_0000011289" description="Glucagon-like peptide 1(7-37)" evidence="3">
    <location>
        <begin position="98"/>
        <end position="128"/>
    </location>
</feature>
<feature type="peptide" id="PRO_0000011290" description="Glucagon-like peptide 1(7-36)" evidence="3">
    <location>
        <begin position="98"/>
        <end position="127"/>
    </location>
</feature>
<feature type="propeptide" id="PRO_0000011291" evidence="6">
    <location>
        <begin position="131"/>
        <end position="145"/>
    </location>
</feature>
<feature type="peptide" id="PRO_0000011292" description="Glucagon-like peptide 2" evidence="6">
    <location>
        <begin position="146"/>
        <end position="178"/>
    </location>
</feature>
<feature type="region of interest" description="Disordered" evidence="8">
    <location>
        <begin position="23"/>
        <end position="56"/>
    </location>
</feature>
<feature type="site" description="Cleavage; by PCSK2" evidence="1">
    <location>
        <begin position="52"/>
        <end position="53"/>
    </location>
</feature>
<feature type="site" description="Cleavage; by PCSK1 and PCSK2" evidence="1">
    <location>
        <begin position="83"/>
        <end position="84"/>
    </location>
</feature>
<feature type="site" description="Cleavage; by PCSK1" evidence="1">
    <location>
        <begin position="91"/>
        <end position="92"/>
    </location>
</feature>
<feature type="site" description="Cleavage; by PCSK1" evidence="1">
    <location>
        <begin position="97"/>
        <end position="98"/>
    </location>
</feature>
<feature type="site" description="Cleavage; by PCSK1" evidence="1">
    <location>
        <begin position="130"/>
        <end position="131"/>
    </location>
</feature>
<feature type="site" description="Cleavage; by PCSK1" evidence="1">
    <location>
        <begin position="145"/>
        <end position="146"/>
    </location>
</feature>
<feature type="modified residue" description="Phosphoserine" evidence="7">
    <location>
        <position position="54"/>
    </location>
</feature>
<feature type="modified residue" description="Phosphoserine" evidence="7">
    <location>
        <position position="105"/>
    </location>
</feature>
<feature type="modified residue" description="Phosphoserine" evidence="7">
    <location>
        <position position="108"/>
    </location>
</feature>
<feature type="modified residue" description="Arginine amide" evidence="1">
    <location>
        <position position="127"/>
    </location>
</feature>
<feature type="modified residue" description="Phosphoserine" evidence="7">
    <location>
        <position position="150"/>
    </location>
</feature>
<feature type="modified residue" description="Phosphoserine" evidence="7">
    <location>
        <position position="152"/>
    </location>
</feature>
<proteinExistence type="evidence at transcript level"/>
<organism>
    <name type="scientific">Octodon degus</name>
    <name type="common">Degu</name>
    <name type="synonym">Sciurus degus</name>
    <dbReference type="NCBI Taxonomy" id="10160"/>
    <lineage>
        <taxon>Eukaryota</taxon>
        <taxon>Metazoa</taxon>
        <taxon>Chordata</taxon>
        <taxon>Craniata</taxon>
        <taxon>Vertebrata</taxon>
        <taxon>Euteleostomi</taxon>
        <taxon>Mammalia</taxon>
        <taxon>Eutheria</taxon>
        <taxon>Euarchontoglires</taxon>
        <taxon>Glires</taxon>
        <taxon>Rodentia</taxon>
        <taxon>Hystricomorpha</taxon>
        <taxon>Octodontidae</taxon>
        <taxon>Octodon</taxon>
    </lineage>
</organism>